<organism>
    <name type="scientific">Caulobacter vibrioides (strain ATCC 19089 / CIP 103742 / CB 15)</name>
    <name type="common">Caulobacter crescentus</name>
    <dbReference type="NCBI Taxonomy" id="190650"/>
    <lineage>
        <taxon>Bacteria</taxon>
        <taxon>Pseudomonadati</taxon>
        <taxon>Pseudomonadota</taxon>
        <taxon>Alphaproteobacteria</taxon>
        <taxon>Caulobacterales</taxon>
        <taxon>Caulobacteraceae</taxon>
        <taxon>Caulobacter</taxon>
    </lineage>
</organism>
<keyword id="KW-0975">Bacterial flagellum</keyword>
<keyword id="KW-1003">Cell membrane</keyword>
<keyword id="KW-0472">Membrane</keyword>
<keyword id="KW-1185">Reference proteome</keyword>
<keyword id="KW-0812">Transmembrane</keyword>
<keyword id="KW-1133">Transmembrane helix</keyword>
<accession>Q45974</accession>
<name>FLIQ_CAUVC</name>
<evidence type="ECO:0000250" key="1"/>
<evidence type="ECO:0000255" key="2"/>
<evidence type="ECO:0000305" key="3"/>
<protein>
    <recommendedName>
        <fullName>Flagellar biosynthetic protein FliQ</fullName>
    </recommendedName>
</protein>
<comment type="function">
    <text>Role in flagellar biosynthesis.</text>
</comment>
<comment type="subcellular location">
    <subcellularLocation>
        <location evidence="3">Cell membrane</location>
        <topology evidence="3">Multi-pass membrane protein</topology>
    </subcellularLocation>
    <subcellularLocation>
        <location evidence="1">Bacterial flagellum basal body</location>
    </subcellularLocation>
</comment>
<comment type="similarity">
    <text evidence="3">Belongs to the FliQ/MopD/SpaQ family.</text>
</comment>
<reference key="1">
    <citation type="journal article" date="1995" name="J. Bacteriol.">
        <title>Caulobacter FliQ and FliR membrane proteins, required for flagellar biogenesis and cell division, belong to a family of virulence factor export proteins.</title>
        <authorList>
            <person name="Zhuang W.Y."/>
            <person name="Shapiro L."/>
        </authorList>
    </citation>
    <scope>NUCLEOTIDE SEQUENCE [GENOMIC DNA]</scope>
    <source>
        <strain>ATCC 19089 / CIP 103742 / CB 15</strain>
    </source>
</reference>
<reference key="2">
    <citation type="journal article" date="2001" name="Proc. Natl. Acad. Sci. U.S.A.">
        <title>Complete genome sequence of Caulobacter crescentus.</title>
        <authorList>
            <person name="Nierman W.C."/>
            <person name="Feldblyum T.V."/>
            <person name="Laub M.T."/>
            <person name="Paulsen I.T."/>
            <person name="Nelson K.E."/>
            <person name="Eisen J.A."/>
            <person name="Heidelberg J.F."/>
            <person name="Alley M.R.K."/>
            <person name="Ohta N."/>
            <person name="Maddock J.R."/>
            <person name="Potocka I."/>
            <person name="Nelson W.C."/>
            <person name="Newton A."/>
            <person name="Stephens C."/>
            <person name="Phadke N.D."/>
            <person name="Ely B."/>
            <person name="DeBoy R.T."/>
            <person name="Dodson R.J."/>
            <person name="Durkin A.S."/>
            <person name="Gwinn M.L."/>
            <person name="Haft D.H."/>
            <person name="Kolonay J.F."/>
            <person name="Smit J."/>
            <person name="Craven M.B."/>
            <person name="Khouri H.M."/>
            <person name="Shetty J."/>
            <person name="Berry K.J."/>
            <person name="Utterback T.R."/>
            <person name="Tran K."/>
            <person name="Wolf A.M."/>
            <person name="Vamathevan J.J."/>
            <person name="Ermolaeva M.D."/>
            <person name="White O."/>
            <person name="Salzberg S.L."/>
            <person name="Venter J.C."/>
            <person name="Shapiro L."/>
            <person name="Fraser C.M."/>
        </authorList>
    </citation>
    <scope>NUCLEOTIDE SEQUENCE [LARGE SCALE GENOMIC DNA]</scope>
    <source>
        <strain>ATCC 19089 / CIP 103742 / CB 15</strain>
    </source>
</reference>
<gene>
    <name type="primary">fliQ</name>
    <name type="ordered locus">CC_1075</name>
</gene>
<dbReference type="EMBL" id="U13663">
    <property type="protein sequence ID" value="AAA66206.1"/>
    <property type="molecule type" value="Genomic_DNA"/>
</dbReference>
<dbReference type="EMBL" id="AE005673">
    <property type="protein sequence ID" value="AAK23059.1"/>
    <property type="molecule type" value="Genomic_DNA"/>
</dbReference>
<dbReference type="PIR" id="I40670">
    <property type="entry name" value="I40670"/>
</dbReference>
<dbReference type="RefSeq" id="NP_419891.1">
    <property type="nucleotide sequence ID" value="NC_002696.2"/>
</dbReference>
<dbReference type="SMR" id="Q45974"/>
<dbReference type="STRING" id="190650.CC_1075"/>
<dbReference type="EnsemblBacteria" id="AAK23059">
    <property type="protein sequence ID" value="AAK23059"/>
    <property type="gene ID" value="CC_1075"/>
</dbReference>
<dbReference type="KEGG" id="ccr:CC_1075"/>
<dbReference type="PATRIC" id="fig|190650.5.peg.1093"/>
<dbReference type="eggNOG" id="COG1987">
    <property type="taxonomic scope" value="Bacteria"/>
</dbReference>
<dbReference type="HOGENOM" id="CLU_164516_0_1_5"/>
<dbReference type="BioCyc" id="CAULO:CC1075-MONOMER"/>
<dbReference type="Proteomes" id="UP000001816">
    <property type="component" value="Chromosome"/>
</dbReference>
<dbReference type="GO" id="GO:0009425">
    <property type="term" value="C:bacterial-type flagellum basal body"/>
    <property type="evidence" value="ECO:0007669"/>
    <property type="project" value="UniProtKB-SubCell"/>
</dbReference>
<dbReference type="GO" id="GO:0005886">
    <property type="term" value="C:plasma membrane"/>
    <property type="evidence" value="ECO:0007669"/>
    <property type="project" value="UniProtKB-SubCell"/>
</dbReference>
<dbReference type="GO" id="GO:0044780">
    <property type="term" value="P:bacterial-type flagellum assembly"/>
    <property type="evidence" value="ECO:0007669"/>
    <property type="project" value="InterPro"/>
</dbReference>
<dbReference type="GO" id="GO:0009306">
    <property type="term" value="P:protein secretion"/>
    <property type="evidence" value="ECO:0007669"/>
    <property type="project" value="InterPro"/>
</dbReference>
<dbReference type="InterPro" id="IPR002191">
    <property type="entry name" value="Bac_export_3"/>
</dbReference>
<dbReference type="InterPro" id="IPR006305">
    <property type="entry name" value="FliQ"/>
</dbReference>
<dbReference type="NCBIfam" id="TIGR01402">
    <property type="entry name" value="fliQ"/>
    <property type="match status" value="1"/>
</dbReference>
<dbReference type="NCBIfam" id="NF004671">
    <property type="entry name" value="PRK06010.1"/>
    <property type="match status" value="1"/>
</dbReference>
<dbReference type="PANTHER" id="PTHR34040">
    <property type="entry name" value="FLAGELLAR BIOSYNTHETIC PROTEIN FLIQ"/>
    <property type="match status" value="1"/>
</dbReference>
<dbReference type="PANTHER" id="PTHR34040:SF2">
    <property type="entry name" value="FLAGELLAR BIOSYNTHETIC PROTEIN FLIQ"/>
    <property type="match status" value="1"/>
</dbReference>
<dbReference type="Pfam" id="PF01313">
    <property type="entry name" value="Bac_export_3"/>
    <property type="match status" value="1"/>
</dbReference>
<dbReference type="PIRSF" id="PIRSF004669">
    <property type="entry name" value="FliQ"/>
    <property type="match status" value="1"/>
</dbReference>
<dbReference type="PRINTS" id="PR00952">
    <property type="entry name" value="TYPE3IMQPROT"/>
</dbReference>
<feature type="chain" id="PRO_0000129092" description="Flagellar biosynthetic protein FliQ">
    <location>
        <begin position="1"/>
        <end position="87"/>
    </location>
</feature>
<feature type="transmembrane region" description="Helical" evidence="2">
    <location>
        <begin position="18"/>
        <end position="38"/>
    </location>
</feature>
<feature type="transmembrane region" description="Helical" evidence="2">
    <location>
        <begin position="55"/>
        <end position="75"/>
    </location>
</feature>
<proteinExistence type="inferred from homology"/>
<sequence>MTGAEVLDVGRDAIWLTLQLCAPVLIVGLVVGVIIGLFQALTQIQEATLVYAPKIVAIFISLLIFLPLMGSLMSGFMRQIAARIAGM</sequence>